<organism>
    <name type="scientific">Bos taurus</name>
    <name type="common">Bovine</name>
    <dbReference type="NCBI Taxonomy" id="9913"/>
    <lineage>
        <taxon>Eukaryota</taxon>
        <taxon>Metazoa</taxon>
        <taxon>Chordata</taxon>
        <taxon>Craniata</taxon>
        <taxon>Vertebrata</taxon>
        <taxon>Euteleostomi</taxon>
        <taxon>Mammalia</taxon>
        <taxon>Eutheria</taxon>
        <taxon>Laurasiatheria</taxon>
        <taxon>Artiodactyla</taxon>
        <taxon>Ruminantia</taxon>
        <taxon>Pecora</taxon>
        <taxon>Bovidae</taxon>
        <taxon>Bovinae</taxon>
        <taxon>Bos</taxon>
    </lineage>
</organism>
<accession>P07589</accession>
<sequence length="2478" mass="272154">MLGGPGPGLLLLLAVLSLGTAVPSAGASKSRRQAQQIVQPQSPLTVSQSKPGCYDNGKHYQINQQWERTYLGSALVCTCYGGSRGFNCESKPEPEETCFDKYTGNTYRVGDTYERPKDSMIWDCTCIGAGRGRISCTIANRCHEGGQSYKIGDTWRRPHETGGYMLECVCLGNGKGEWTCKPIAEKCFDQAAGTSYVVGETWEKPYQGWMMVDCTCLGEGSGRITCTSRNRCNDQDTRTSYRIGDTWSKKDNRGNLLQCICTGNGRGEWKCERHTSLQTTSAGSGSFTDVRTAIYQPQPHPQPPPYGHCVTDSGVVYSVGMQWLKTQGNKQMLCTCLGNGVSCQETAVTQTYGGNSNGEPCVLPFTYNGKTFYSCTTEGRQDGHLWCSTTSNYEQDQKYSFCTDHTVLVQTRGGNSNGALCHFPFLYNNHNYTDCTSEGRRDNMKWCGTTQNYDADQKFGFCPMAAHEEICTTNEGVMYRIGDQWDKQHDMGHMMRCTCVGNGRGEWTCVAYSQLRDQCIVDGITYNVNDTFHKRHEEGHMLNCTCFGQGRGRWKCDPVDQCQDSETRTFYQIGDSWEKYLQGVRYQCYCYGRGIGEWACQPLQTYPDTSGPVQVIITETPSQPNSHPIQWSAPESSHISKYILRWKPKNSPDRWKEATIPGHLNSYTIKGLRPGVVYEGQLISVQHYGQREVTRFDFTTTSTSPAVTSNTVTGETTPLSPVVATSESVTEITASSFVVSWVSASDTVSGFRVEYELSEEGDEPQYLDLPSTATSVNIPDLLPGRKYTVNVYEISEEGEQNLILSTSQTTAPDAPPDPTVDQVDDTSIVVRWSRPRAPITGYRIVYSPSVEGSSTELNLPETANSVTLSDLQPGVQYNITIYAVEENQESTPVFIQQETTGVPRSDKVPPPRDLQFVEVTDVKITIMWTPPESPVTGYRVDVIPVNLPGEHGQRLPVSRNTFAEVTGLSPGVTYHFKVFAVNQGRESKPLTAQQATKLDAPTNLQFINETDTTVIVTWTPPRARIVGYRLTVGLTRGGQPKQYNVGPAASQYPLRNLQPGSEYAVSLVAVKGNQQSPRVTGVFTTLQPLGSIPHYNTEVTETTIVITWTPAPRIGFKLGVRPSQGGEAPREVTSESGSIVVSGLTPGVEYVYTISVLRDGQERDAPIVKKVVTPLSPPTNLHLEANPDTGVLTVSWERSTTPDITGYRITTTPTNGQQGYSLEEVVHADQSSCTFENLSPGLEYNVSVYTVKDDKESVPISDTIIPEVPQLTDLSFVDITDSSIGLRWTPLNSSTIIGYRITVVAAGEGIPIFEDFVDSSVGYYTVTGLEPGIDYDISVITLINGGESAPTTLTQQTAVPPPTDLRFTNVGPDTMRVTWAPPSSIELTNLLVRYSPVKNEEDVAELSISPSDNAVVLTNLLPGTEYLVSVSSVYEQHESIPLRGRQKTALDSPSGIDFSDITANSFTVHWIAPRATITGYRIRHHPENMGGRPREDRVPPSRNSITLTNLNPGTEYVVSIVALNSKEESLPLVGQQSTVSDVPRDLEVIAATPTSLLISWDAPAVTVRYYRITYGETGGSSPVQEFTVPGSKSTATISGLKPGVDYTITVYAVTGRGDSPASSKPVSINYRTEIDKPSQMQVTDVQDNSISVRWLPSSSPVTGYRVTTAPKNGPGPSKTKTVGPDQTEMTIEGLQPTVEYVVSVYAQNQNGESQPLVQTAVTNIDRPKGLAFTDVDVDSIKIAWESPQGQVSRYRVTYSSPEDGIHELFPAPDGEEETAELQGLRPGSEYTVSVVALHDDMESQPLIGTQSTTIPAPTNLKFTQVTPTSLTAQWTAPNVQLTGYRVRVTPKEKTGPMKEINLAPDSSSVVVSGLMVATKYEVSVYALKDTLTSRPAQGVVTTLENVSPPRRARVTDATETTITISWRTKTETITGFQVDAIPANGQTPIQRTIRPDVRSYTITGLQPGTDYKIHLYTLNDNARSSPVVIDASTAIDAPSNLRFLATTPNSLLVSWQPPRARITGYIIKYEKPGSPPREVVPRPRPGVTEATITGLEPGTEYTIQVIALKNNQKSEPLIGRKKTDELPQLVTLPHPNLHGPEILDVPSTVQKTPFITNPGYDTGNGIQLPGTSGQQPSLGQQMIFEEHGFRRTTPPTTATPVRHRPRPYPPNVNEEIQIGHVPRGDVDHHLYPHVVGLNPNASTGQEALSQTTISWTPFQESSEYIISCHPVGIDEEPLQFRVPGTSASATLTGLTRGATYNIIVEAVKDQQRQKVREEVVTVGNSVDQGLSQPTDDSCFDPYTVSHYAIGEEWERLSDSGFKLSCQCLGFGSGHFRCDSSKWCHDNGVNYKIGEKWDRQGENGQMMSCTCLGNGKGEFKCDPHEATCYDDGKTYHVGEQWQKEYLGAICSCTCFGGQRGWRCDNCRRPGAEPGNEGSTAHSYNQYSQRYHQRTNTNVNCPIECFMPLDVQADREDSRE</sequence>
<evidence type="ECO:0000250" key="1"/>
<evidence type="ECO:0000250" key="2">
    <source>
        <dbReference type="UniProtKB" id="P02751"/>
    </source>
</evidence>
<evidence type="ECO:0000250" key="3">
    <source>
        <dbReference type="UniProtKB" id="P11276"/>
    </source>
</evidence>
<evidence type="ECO:0000255" key="4"/>
<evidence type="ECO:0000255" key="5">
    <source>
        <dbReference type="PROSITE-ProRule" id="PRU00316"/>
    </source>
</evidence>
<evidence type="ECO:0000255" key="6">
    <source>
        <dbReference type="PROSITE-ProRule" id="PRU00478"/>
    </source>
</evidence>
<evidence type="ECO:0000255" key="7">
    <source>
        <dbReference type="PROSITE-ProRule" id="PRU00479"/>
    </source>
</evidence>
<evidence type="ECO:0000256" key="8">
    <source>
        <dbReference type="SAM" id="MobiDB-lite"/>
    </source>
</evidence>
<evidence type="ECO:0000269" key="9">
    <source>
    </source>
</evidence>
<evidence type="ECO:0000269" key="10">
    <source>
    </source>
</evidence>
<evidence type="ECO:0000269" key="11">
    <source>
    </source>
</evidence>
<evidence type="ECO:0000269" key="12">
    <source>
    </source>
</evidence>
<evidence type="ECO:0000305" key="13"/>
<gene>
    <name evidence="2" type="primary">FN1</name>
</gene>
<comment type="function">
    <text evidence="2 3">Fibronectins bind cell surfaces and various compounds including collagen, fibrin, heparin, DNA, and actin. Fibronectins are involved in cell adhesion, cell motility, opsonization, wound healing, and maintenance of cell shape (By similarity). Involved in osteoblast compaction through the fibronectin fibrillogenesis cell-mediated matrix assembly process, essential for osteoblast mineralization. Participates in the regulation of type I collagen deposition by osteoblasts (By similarity).</text>
</comment>
<comment type="function">
    <molecule>Anastellin</molecule>
    <text evidence="2">Binds fibronectin and induces fibril formation. This fibronectin polymer, named superfibronectin, exhibits enhanced adhesive properties. Both anastellin and superfibronectin inhibit tumor growth, angiogenesis and metastasis. Anastellin activates p38 MAPK and inhibits lysophospholipid signaling.</text>
</comment>
<comment type="function">
    <text evidence="3">Secreted by contracting muscle, induces liver autophagy, a degradative pathway for nutrient mobilization and damage removal, and systemic insulin sensitization via hepatic ITGA5:ITGB1 integrin receptor signaling.</text>
</comment>
<comment type="subunit">
    <text evidence="1 2 3">Mostly heterodimers or multimers of alternatively spliced variants, connected by 2 disulfide bonds near the carboxyl ends; to a lesser extent homodimers. Interacts with FBLN1, AMBP, TNR, LGALS3BP and COL13A1. Interacts with FBLN7 (By similarity). Interacts with COMP. Interacts (via type III repeats 9-14) with TNFAIP6 (via CUB domain); this interaction enhances fibronectin fibril assembly. TNFAIP6 may act as a bridging molecule between FN1 and THBS1 (By similarity). Interacts with TNR; the interaction inhibits cell adhesion and neurite outgrowth (By similarity). Interacts with FST3 and MYOC (By similarity). Interacts with SVEP1 (By similarity).</text>
</comment>
<comment type="interaction">
    <interactant intactId="EBI-11147184">
        <id>P07589</id>
    </interactant>
    <interactant intactId="EBI-8869614">
        <id>Q15113</id>
        <label>PCOLCE</label>
    </interactant>
    <organismsDiffer>true</organismsDiffer>
    <experiments>2</experiments>
</comment>
<comment type="subcellular location">
    <subcellularLocation>
        <location evidence="3">Secreted</location>
        <location evidence="3">Extracellular space</location>
        <location evidence="3">Extracellular matrix</location>
    </subcellularLocation>
    <subcellularLocation>
        <location evidence="3">Secreted</location>
    </subcellularLocation>
</comment>
<comment type="alternative products">
    <event type="alternative splicing"/>
    <isoform>
        <id>P07589-1</id>
        <name>1</name>
        <sequence type="displayed"/>
    </isoform>
    <text evidence="13">A number of isoforms are produced. The diversity of isoforms depends on the V region and either of the two extra domain which can be either included or excluded (partially or completely for the V region).</text>
</comment>
<comment type="PTM">
    <text evidence="2">Sulfated.</text>
</comment>
<comment type="PTM">
    <text evidence="3">Forms covalent cross-links mediated by a transglutaminase, such as F13A or TGM2, between a glutamine and the epsilon-amino group of a lysine residue, forming homopolymers and heteropolymers (e.g. fibrinogen-fibronectin, collagen-fibronectin heteropolymers).</text>
</comment>
<comment type="PTM">
    <text evidence="1">Proteolytic processing produces the C-terminal NC1 peptide, anastellin.</text>
</comment>
<comment type="PTM">
    <text evidence="3">Some lysine residues are oxidized to allysine by LOXL3, promoting fibronectin activation and matrix formation.</text>
</comment>
<comment type="PTM">
    <text evidence="10">Serotonylated on Gln residues by TGM2 in response to hypoxia.</text>
</comment>
<keyword id="KW-0011">Acute phase</keyword>
<keyword id="KW-0025">Alternative splicing</keyword>
<keyword id="KW-0037">Angiogenesis</keyword>
<keyword id="KW-0130">Cell adhesion</keyword>
<keyword id="KW-0133">Cell shape</keyword>
<keyword id="KW-0903">Direct protein sequencing</keyword>
<keyword id="KW-1015">Disulfide bond</keyword>
<keyword id="KW-0272">Extracellular matrix</keyword>
<keyword id="KW-0325">Glycoprotein</keyword>
<keyword id="KW-0358">Heparin-binding</keyword>
<keyword id="KW-1017">Isopeptide bond</keyword>
<keyword id="KW-0558">Oxidation</keyword>
<keyword id="KW-0597">Phosphoprotein</keyword>
<keyword id="KW-0873">Pyrrolidone carboxylic acid</keyword>
<keyword id="KW-1185">Reference proteome</keyword>
<keyword id="KW-0677">Repeat</keyword>
<keyword id="KW-0964">Secreted</keyword>
<keyword id="KW-0732">Signal</keyword>
<keyword id="KW-0765">Sulfation</keyword>
<name>FINC_BOVIN</name>
<dbReference type="EMBL" id="AAFC03125045">
    <property type="status" value="NOT_ANNOTATED_CDS"/>
    <property type="molecule type" value="Genomic_DNA"/>
</dbReference>
<dbReference type="EMBL" id="AAFC03065407">
    <property type="status" value="NOT_ANNOTATED_CDS"/>
    <property type="molecule type" value="Genomic_DNA"/>
</dbReference>
<dbReference type="EMBL" id="K00800">
    <property type="protein sequence ID" value="AAA30521.2"/>
    <property type="molecule type" value="mRNA"/>
</dbReference>
<dbReference type="PIR" id="A26452">
    <property type="entry name" value="FNBO"/>
</dbReference>
<dbReference type="SMR" id="P07589"/>
<dbReference type="FunCoup" id="P07589">
    <property type="interactions" value="544"/>
</dbReference>
<dbReference type="IntAct" id="P07589">
    <property type="interactions" value="7"/>
</dbReference>
<dbReference type="STRING" id="9913.ENSBTAP00000010925"/>
<dbReference type="GlyConnect" id="721">
    <property type="glycosylation" value="1 O-Linked glycan (1 site)"/>
</dbReference>
<dbReference type="GlyCosmos" id="P07589">
    <property type="glycosylation" value="11 sites, 1 glycan"/>
</dbReference>
<dbReference type="GlyGen" id="P07589">
    <property type="glycosylation" value="11 sites, 1 O-linked glycan (1 site)"/>
</dbReference>
<dbReference type="iPTMnet" id="P07589"/>
<dbReference type="PaxDb" id="9913-ENSBTAP00000010925"/>
<dbReference type="PeptideAtlas" id="P07589"/>
<dbReference type="eggNOG" id="ENOG502QPTS">
    <property type="taxonomic scope" value="Eukaryota"/>
</dbReference>
<dbReference type="InParanoid" id="P07589"/>
<dbReference type="OrthoDB" id="261433at2759"/>
<dbReference type="Proteomes" id="UP000009136">
    <property type="component" value="Unplaced"/>
</dbReference>
<dbReference type="GO" id="GO:0005576">
    <property type="term" value="C:extracellular region"/>
    <property type="evidence" value="ECO:0000304"/>
    <property type="project" value="Reactome"/>
</dbReference>
<dbReference type="GO" id="GO:0005615">
    <property type="term" value="C:extracellular space"/>
    <property type="evidence" value="ECO:0000314"/>
    <property type="project" value="CAFA"/>
</dbReference>
<dbReference type="GO" id="GO:0097718">
    <property type="term" value="F:disordered domain specific binding"/>
    <property type="evidence" value="ECO:0000353"/>
    <property type="project" value="CAFA"/>
</dbReference>
<dbReference type="GO" id="GO:0008201">
    <property type="term" value="F:heparin binding"/>
    <property type="evidence" value="ECO:0007669"/>
    <property type="project" value="UniProtKB-KW"/>
</dbReference>
<dbReference type="GO" id="GO:0005178">
    <property type="term" value="F:integrin binding"/>
    <property type="evidence" value="ECO:0000318"/>
    <property type="project" value="GO_Central"/>
</dbReference>
<dbReference type="GO" id="GO:0043394">
    <property type="term" value="F:proteoglycan binding"/>
    <property type="evidence" value="ECO:0000318"/>
    <property type="project" value="GO_Central"/>
</dbReference>
<dbReference type="GO" id="GO:0006953">
    <property type="term" value="P:acute-phase response"/>
    <property type="evidence" value="ECO:0007669"/>
    <property type="project" value="UniProtKB-KW"/>
</dbReference>
<dbReference type="GO" id="GO:0001525">
    <property type="term" value="P:angiogenesis"/>
    <property type="evidence" value="ECO:0007669"/>
    <property type="project" value="UniProtKB-KW"/>
</dbReference>
<dbReference type="GO" id="GO:0007160">
    <property type="term" value="P:cell-matrix adhesion"/>
    <property type="evidence" value="ECO:0000318"/>
    <property type="project" value="GO_Central"/>
</dbReference>
<dbReference type="GO" id="GO:0007044">
    <property type="term" value="P:cell-substrate junction assembly"/>
    <property type="evidence" value="ECO:0000318"/>
    <property type="project" value="GO_Central"/>
</dbReference>
<dbReference type="GO" id="GO:0007507">
    <property type="term" value="P:heart development"/>
    <property type="evidence" value="ECO:0000318"/>
    <property type="project" value="GO_Central"/>
</dbReference>
<dbReference type="GO" id="GO:0007399">
    <property type="term" value="P:nervous system development"/>
    <property type="evidence" value="ECO:0000318"/>
    <property type="project" value="GO_Central"/>
</dbReference>
<dbReference type="GO" id="GO:0008360">
    <property type="term" value="P:regulation of cell shape"/>
    <property type="evidence" value="ECO:0007669"/>
    <property type="project" value="UniProtKB-KW"/>
</dbReference>
<dbReference type="CDD" id="cd00061">
    <property type="entry name" value="FN1"/>
    <property type="match status" value="12"/>
</dbReference>
<dbReference type="CDD" id="cd00062">
    <property type="entry name" value="FN2"/>
    <property type="match status" value="2"/>
</dbReference>
<dbReference type="CDD" id="cd00063">
    <property type="entry name" value="FN3"/>
    <property type="match status" value="16"/>
</dbReference>
<dbReference type="FunFam" id="2.10.70.10:FF:000004">
    <property type="entry name" value="Fibronectin 1"/>
    <property type="match status" value="1"/>
</dbReference>
<dbReference type="FunFam" id="2.10.70.10:FF:000006">
    <property type="entry name" value="Fibronectin 1"/>
    <property type="match status" value="3"/>
</dbReference>
<dbReference type="FunFam" id="2.10.70.10:FF:000007">
    <property type="entry name" value="Fibronectin 1"/>
    <property type="match status" value="2"/>
</dbReference>
<dbReference type="FunFam" id="2.10.70.10:FF:000018">
    <property type="entry name" value="Fibronectin 1"/>
    <property type="match status" value="1"/>
</dbReference>
<dbReference type="FunFam" id="2.10.70.10:FF:000027">
    <property type="entry name" value="Fibronectin 1"/>
    <property type="match status" value="1"/>
</dbReference>
<dbReference type="FunFam" id="2.60.40.10:FF:000099">
    <property type="entry name" value="Fibronectin 1"/>
    <property type="match status" value="3"/>
</dbReference>
<dbReference type="FunFam" id="2.60.40.10:FF:000417">
    <property type="entry name" value="Fibronectin 1"/>
    <property type="match status" value="1"/>
</dbReference>
<dbReference type="FunFam" id="2.60.40.10:FF:000579">
    <property type="entry name" value="Fibronectin 1"/>
    <property type="match status" value="1"/>
</dbReference>
<dbReference type="FunFam" id="2.60.40.10:FF:000622">
    <property type="entry name" value="Fibronectin 1"/>
    <property type="match status" value="1"/>
</dbReference>
<dbReference type="FunFam" id="2.60.40.10:FF:001069">
    <property type="entry name" value="Fibronectin 1"/>
    <property type="match status" value="1"/>
</dbReference>
<dbReference type="FunFam" id="2.10.10.10:FF:000001">
    <property type="entry name" value="Fibronectin 1a isoform 1"/>
    <property type="match status" value="2"/>
</dbReference>
<dbReference type="FunFam" id="2.10.70.10:FF:000017">
    <property type="entry name" value="Fibronectin isoform X1"/>
    <property type="match status" value="1"/>
</dbReference>
<dbReference type="FunFam" id="2.60.40.10:FF:000227">
    <property type="entry name" value="Fibronectin isoform X1"/>
    <property type="match status" value="1"/>
</dbReference>
<dbReference type="FunFam" id="2.10.70.10:FF:000020">
    <property type="entry name" value="fibronectin isoform X1"/>
    <property type="match status" value="1"/>
</dbReference>
<dbReference type="FunFam" id="2.10.70.10:FF:000021">
    <property type="entry name" value="fibronectin isoform X1"/>
    <property type="match status" value="1"/>
</dbReference>
<dbReference type="FunFam" id="2.10.70.10:FF:000022">
    <property type="entry name" value="fibronectin isoform X1"/>
    <property type="match status" value="1"/>
</dbReference>
<dbReference type="FunFam" id="2.60.40.10:FF:000275">
    <property type="entry name" value="fibronectin isoform X1"/>
    <property type="match status" value="1"/>
</dbReference>
<dbReference type="FunFam" id="2.60.40.10:FF:000300">
    <property type="entry name" value="fibronectin isoform X1"/>
    <property type="match status" value="1"/>
</dbReference>
<dbReference type="FunFam" id="2.60.40.10:FF:000306">
    <property type="entry name" value="fibronectin isoform X1"/>
    <property type="match status" value="1"/>
</dbReference>
<dbReference type="FunFam" id="2.60.40.10:FF:000317">
    <property type="entry name" value="fibronectin isoform X1"/>
    <property type="match status" value="1"/>
</dbReference>
<dbReference type="FunFam" id="2.60.40.10:FF:000336">
    <property type="entry name" value="fibronectin isoform X1"/>
    <property type="match status" value="1"/>
</dbReference>
<dbReference type="FunFam" id="2.60.40.10:FF:000364">
    <property type="entry name" value="fibronectin isoform X1"/>
    <property type="match status" value="1"/>
</dbReference>
<dbReference type="FunFam" id="2.60.40.10:FF:000382">
    <property type="entry name" value="fibronectin isoform X1"/>
    <property type="match status" value="1"/>
</dbReference>
<dbReference type="FunFam" id="2.60.40.10:FF:000447">
    <property type="entry name" value="fibronectin isoform X1"/>
    <property type="match status" value="1"/>
</dbReference>
<dbReference type="FunFam" id="2.60.40.10:FF:000433">
    <property type="entry name" value="fibronectin isoform X5"/>
    <property type="match status" value="1"/>
</dbReference>
<dbReference type="Gene3D" id="2.10.70.10">
    <property type="entry name" value="Complement Module, domain 1"/>
    <property type="match status" value="12"/>
</dbReference>
<dbReference type="Gene3D" id="2.10.10.10">
    <property type="entry name" value="Fibronectin, type II, collagen-binding"/>
    <property type="match status" value="2"/>
</dbReference>
<dbReference type="Gene3D" id="2.60.40.10">
    <property type="entry name" value="Immunoglobulins"/>
    <property type="match status" value="17"/>
</dbReference>
<dbReference type="InterPro" id="IPR050991">
    <property type="entry name" value="ECM_Regulatory_Proteins"/>
</dbReference>
<dbReference type="InterPro" id="IPR000083">
    <property type="entry name" value="Fibronectin_type1"/>
</dbReference>
<dbReference type="InterPro" id="IPR003961">
    <property type="entry name" value="FN3_dom"/>
</dbReference>
<dbReference type="InterPro" id="IPR036116">
    <property type="entry name" value="FN3_sf"/>
</dbReference>
<dbReference type="InterPro" id="IPR000562">
    <property type="entry name" value="FN_type2_dom"/>
</dbReference>
<dbReference type="InterPro" id="IPR036943">
    <property type="entry name" value="FN_type2_sf"/>
</dbReference>
<dbReference type="InterPro" id="IPR013783">
    <property type="entry name" value="Ig-like_fold"/>
</dbReference>
<dbReference type="InterPro" id="IPR013806">
    <property type="entry name" value="Kringle-like"/>
</dbReference>
<dbReference type="PANTHER" id="PTHR46708:SF8">
    <property type="entry name" value="FIBRONECTIN"/>
    <property type="match status" value="1"/>
</dbReference>
<dbReference type="PANTHER" id="PTHR46708">
    <property type="entry name" value="TENASCIN"/>
    <property type="match status" value="1"/>
</dbReference>
<dbReference type="Pfam" id="PF00039">
    <property type="entry name" value="fn1"/>
    <property type="match status" value="11"/>
</dbReference>
<dbReference type="Pfam" id="PF00040">
    <property type="entry name" value="fn2"/>
    <property type="match status" value="2"/>
</dbReference>
<dbReference type="Pfam" id="PF00041">
    <property type="entry name" value="fn3"/>
    <property type="match status" value="17"/>
</dbReference>
<dbReference type="PRINTS" id="PR00013">
    <property type="entry name" value="FNTYPEII"/>
</dbReference>
<dbReference type="SMART" id="SM00058">
    <property type="entry name" value="FN1"/>
    <property type="match status" value="12"/>
</dbReference>
<dbReference type="SMART" id="SM00059">
    <property type="entry name" value="FN2"/>
    <property type="match status" value="2"/>
</dbReference>
<dbReference type="SMART" id="SM00060">
    <property type="entry name" value="FN3"/>
    <property type="match status" value="17"/>
</dbReference>
<dbReference type="SUPFAM" id="SSF49265">
    <property type="entry name" value="Fibronectin type III"/>
    <property type="match status" value="11"/>
</dbReference>
<dbReference type="SUPFAM" id="SSF57603">
    <property type="entry name" value="FnI-like domain"/>
    <property type="match status" value="12"/>
</dbReference>
<dbReference type="SUPFAM" id="SSF57440">
    <property type="entry name" value="Kringle-like"/>
    <property type="match status" value="2"/>
</dbReference>
<dbReference type="PROSITE" id="PS00022">
    <property type="entry name" value="EGF_1"/>
    <property type="match status" value="2"/>
</dbReference>
<dbReference type="PROSITE" id="PS01253">
    <property type="entry name" value="FN1_1"/>
    <property type="match status" value="12"/>
</dbReference>
<dbReference type="PROSITE" id="PS51091">
    <property type="entry name" value="FN1_2"/>
    <property type="match status" value="12"/>
</dbReference>
<dbReference type="PROSITE" id="PS00023">
    <property type="entry name" value="FN2_1"/>
    <property type="match status" value="2"/>
</dbReference>
<dbReference type="PROSITE" id="PS51092">
    <property type="entry name" value="FN2_2"/>
    <property type="match status" value="2"/>
</dbReference>
<dbReference type="PROSITE" id="PS50853">
    <property type="entry name" value="FN3"/>
    <property type="match status" value="17"/>
</dbReference>
<feature type="signal peptide" evidence="2">
    <location>
        <begin position="1"/>
        <end position="32"/>
    </location>
</feature>
<feature type="chain" id="PRO_0000158527" description="Fibronectin">
    <location>
        <begin position="33"/>
        <end position="2478"/>
    </location>
</feature>
<feature type="chain" id="PRO_0000390478" description="Anastellin" evidence="1">
    <location>
        <begin position="628"/>
        <end position="702"/>
    </location>
</feature>
<feature type="domain" description="Fibronectin type-I 1" evidence="6">
    <location>
        <begin position="51"/>
        <end position="91"/>
    </location>
</feature>
<feature type="domain" description="Fibronectin type-I 2" evidence="6">
    <location>
        <begin position="96"/>
        <end position="139"/>
    </location>
</feature>
<feature type="domain" description="Fibronectin type-I 3" evidence="6">
    <location>
        <begin position="140"/>
        <end position="183"/>
    </location>
</feature>
<feature type="domain" description="Fibronectin type-I 4" evidence="6">
    <location>
        <begin position="185"/>
        <end position="229"/>
    </location>
</feature>
<feature type="domain" description="Fibronectin type-I 5" evidence="6">
    <location>
        <begin position="230"/>
        <end position="274"/>
    </location>
</feature>
<feature type="domain" description="Fibronectin type-I 6" evidence="6">
    <location>
        <begin position="307"/>
        <end position="344"/>
    </location>
</feature>
<feature type="domain" description="Fibronectin type-II 1" evidence="6 7">
    <location>
        <begin position="356"/>
        <end position="404"/>
    </location>
</feature>
<feature type="domain" description="Fibronectin type-II 2" evidence="6 7">
    <location>
        <begin position="416"/>
        <end position="464"/>
    </location>
</feature>
<feature type="domain" description="Fibronectin type-I 7" evidence="6">
    <location>
        <begin position="469"/>
        <end position="517"/>
    </location>
</feature>
<feature type="domain" description="Fibronectin type-I 8" evidence="6">
    <location>
        <begin position="517"/>
        <end position="559"/>
    </location>
</feature>
<feature type="domain" description="Fibronectin type-I 9" evidence="6">
    <location>
        <begin position="560"/>
        <end position="603"/>
    </location>
</feature>
<feature type="domain" description="Fibronectin type-III 1">
    <location>
        <begin position="611"/>
        <end position="706"/>
    </location>
</feature>
<feature type="domain" description="Fibronectin type-III 2" evidence="5 6 7">
    <location>
        <begin position="718"/>
        <end position="813"/>
    </location>
</feature>
<feature type="domain" description="Fibronectin type-III 3" evidence="5 6 7">
    <location>
        <begin position="814"/>
        <end position="903"/>
    </location>
</feature>
<feature type="domain" description="Fibronectin type-III 4" evidence="5 6 7">
    <location>
        <begin position="910"/>
        <end position="1001"/>
    </location>
</feature>
<feature type="domain" description="Fibronectin type-III 5" evidence="5 6 7">
    <location>
        <begin position="1002"/>
        <end position="1089"/>
    </location>
</feature>
<feature type="domain" description="Fibronectin type-III 6" evidence="5 6 7">
    <location>
        <begin position="1090"/>
        <end position="1176"/>
    </location>
</feature>
<feature type="domain" description="Fibronectin type-III 7" evidence="5 6 7">
    <location>
        <begin position="1177"/>
        <end position="1271"/>
    </location>
</feature>
<feature type="domain" description="Fibronectin type-III 8; extra domain B" evidence="5 6 7">
    <location>
        <begin position="1272"/>
        <end position="1360"/>
    </location>
</feature>
<feature type="domain" description="Fibronectin type-III 9" evidence="5 6 7">
    <location>
        <begin position="1361"/>
        <end position="1452"/>
    </location>
</feature>
<feature type="domain" description="Fibronectin type-III 10" evidence="5">
    <location>
        <begin position="1453"/>
        <end position="1541"/>
    </location>
</feature>
<feature type="domain" description="Fibronectin type-III 11" evidence="5">
    <location>
        <begin position="1542"/>
        <end position="1635"/>
    </location>
</feature>
<feature type="domain" description="Fibronectin type-III 12" evidence="5">
    <location>
        <begin position="1636"/>
        <end position="1727"/>
    </location>
</feature>
<feature type="domain" description="Fibronectin type-III 13; extra domain A" evidence="5 6 7">
    <location>
        <begin position="1728"/>
        <end position="1815"/>
    </location>
</feature>
<feature type="domain" description="Fibronectin type-III 14" evidence="5">
    <location>
        <begin position="1816"/>
        <end position="1909"/>
    </location>
</feature>
<feature type="domain" description="Fibronectin type-III 15" evidence="5">
    <location>
        <begin position="1910"/>
        <end position="1996"/>
    </location>
</feature>
<feature type="domain" description="Fibronectin type-III 16" evidence="5">
    <location>
        <begin position="1997"/>
        <end position="2087"/>
    </location>
</feature>
<feature type="domain" description="Fibronectin type-III 17" evidence="5">
    <location>
        <begin position="2195"/>
        <end position="2289"/>
    </location>
</feature>
<feature type="domain" description="Fibronectin type-I 10" evidence="6">
    <location>
        <begin position="2296"/>
        <end position="2340"/>
    </location>
</feature>
<feature type="domain" description="Fibronectin type-I 11" evidence="6">
    <location>
        <begin position="2341"/>
        <end position="2383"/>
    </location>
</feature>
<feature type="domain" description="Fibronectin type-I 12" evidence="6">
    <location>
        <begin position="2385"/>
        <end position="2428"/>
    </location>
</feature>
<feature type="DNA-binding region">
    <location>
        <begin position="908"/>
        <end position="1173"/>
    </location>
</feature>
<feature type="region of interest" description="Fibrin- and heparin-binding 1">
    <location>
        <begin position="53"/>
        <end position="273"/>
    </location>
</feature>
<feature type="region of interest" description="Collagen-binding">
    <location>
        <begin position="309"/>
        <end position="609"/>
    </location>
</feature>
<feature type="region of interest" description="Critical for collagen binding" evidence="2">
    <location>
        <begin position="465"/>
        <end position="478"/>
    </location>
</feature>
<feature type="region of interest" description="Cell-attachment">
    <location>
        <begin position="1359"/>
        <end position="1632"/>
    </location>
</feature>
<feature type="region of interest" description="Disordered" evidence="8">
    <location>
        <begin position="1484"/>
        <end position="1504"/>
    </location>
</feature>
<feature type="region of interest" description="Disordered" evidence="8">
    <location>
        <begin position="1666"/>
        <end position="1685"/>
    </location>
</feature>
<feature type="region of interest" description="Heparin-binding 2">
    <location>
        <begin position="1813"/>
        <end position="2083"/>
    </location>
</feature>
<feature type="region of interest" description="Binds to FBLN1" evidence="2">
    <location>
        <begin position="1905"/>
        <end position="2083"/>
    </location>
</feature>
<feature type="region of interest" description="V region (type III connecting segment, IIICS)">
    <location>
        <begin position="2084"/>
        <end position="2203"/>
    </location>
</feature>
<feature type="region of interest" description="Disordered" evidence="8">
    <location>
        <begin position="2150"/>
        <end position="2170"/>
    </location>
</feature>
<feature type="region of interest" description="Fibrin-binding 2">
    <location>
        <begin position="2298"/>
        <end position="2429"/>
    </location>
</feature>
<feature type="short sequence motif" description="Cell attachment site" evidence="2">
    <location>
        <begin position="1616"/>
        <end position="1618"/>
    </location>
</feature>
<feature type="short sequence motif" description="Cell attachment site" evidence="1">
    <location>
        <begin position="2183"/>
        <end position="2185"/>
    </location>
</feature>
<feature type="compositionally biased region" description="Low complexity" evidence="8">
    <location>
        <begin position="2151"/>
        <end position="2160"/>
    </location>
</feature>
<feature type="site" description="Important for superfibronectin formation" evidence="2">
    <location>
        <position position="664"/>
    </location>
</feature>
<feature type="site" description="Important for superfibronectin formation" evidence="2">
    <location>
        <position position="667"/>
    </location>
</feature>
<feature type="modified residue" description="Pyrrolidone carboxylic acid" evidence="2">
    <location>
        <position position="33"/>
    </location>
</feature>
<feature type="modified residue" description="Phosphoserine" evidence="3">
    <location>
        <position position="286"/>
    </location>
</feature>
<feature type="modified residue" description="Sulfotyrosine" evidence="4">
    <location>
        <position position="877"/>
    </location>
</feature>
<feature type="modified residue" description="Sulfotyrosine" evidence="4">
    <location>
        <position position="882"/>
    </location>
</feature>
<feature type="modified residue" description="Sulfotyrosine" evidence="4">
    <location>
        <position position="2394"/>
    </location>
</feature>
<feature type="modified residue" description="Phosphothreonine" evidence="2">
    <location>
        <position position="2455"/>
    </location>
</feature>
<feature type="modified residue" description="Phosphoserine" evidence="12">
    <location>
        <position position="2476"/>
    </location>
</feature>
<feature type="glycosylation site" description="O-linked (GalNAc...) threonine" evidence="9">
    <location>
        <position position="280"/>
    </location>
</feature>
<feature type="glycosylation site" description="N-linked (GlcNAc...) asparagine" evidence="4">
    <location>
        <position position="431"/>
    </location>
</feature>
<feature type="glycosylation site" description="N-linked (GlcNAc...) asparagine" evidence="4">
    <location>
        <position position="529"/>
    </location>
</feature>
<feature type="glycosylation site" description="N-linked (GlcNAc...) asparagine" evidence="4">
    <location>
        <position position="543"/>
    </location>
</feature>
<feature type="glycosylation site" description="N-linked (GlcNAc...) asparagine" evidence="4">
    <location>
        <position position="878"/>
    </location>
</feature>
<feature type="glycosylation site" description="N-linked (GlcNAc...) asparagine" evidence="4">
    <location>
        <position position="1008"/>
    </location>
</feature>
<feature type="glycosylation site" description="N-linked (GlcNAc...) asparagine" evidence="4">
    <location>
        <position position="1245"/>
    </location>
</feature>
<feature type="glycosylation site" description="N-linked (GlcNAc...) asparagine" evidence="4">
    <location>
        <position position="1292"/>
    </location>
</feature>
<feature type="glycosylation site" description="O-linked (GalNAc...) threonine" evidence="11">
    <location>
        <position position="2156"/>
    </location>
</feature>
<feature type="glycosylation site" description="O-linked (GalNAc...) threonine" evidence="11">
    <location>
        <position position="2157"/>
    </location>
</feature>
<feature type="glycosylation site" description="N-linked (GlcNAc...) asparagine" evidence="4">
    <location>
        <position position="2200"/>
    </location>
</feature>
<feature type="disulfide bond" evidence="2">
    <location>
        <begin position="53"/>
        <end position="79"/>
    </location>
</feature>
<feature type="disulfide bond" evidence="2">
    <location>
        <begin position="77"/>
        <end position="88"/>
    </location>
</feature>
<feature type="disulfide bond" evidence="2">
    <location>
        <begin position="98"/>
        <end position="126"/>
    </location>
</feature>
<feature type="disulfide bond" evidence="2">
    <location>
        <begin position="124"/>
        <end position="136"/>
    </location>
</feature>
<feature type="disulfide bond" evidence="2">
    <location>
        <begin position="142"/>
        <end position="170"/>
    </location>
</feature>
<feature type="disulfide bond" evidence="2">
    <location>
        <begin position="168"/>
        <end position="180"/>
    </location>
</feature>
<feature type="disulfide bond" evidence="2">
    <location>
        <begin position="187"/>
        <end position="216"/>
    </location>
</feature>
<feature type="disulfide bond" evidence="2">
    <location>
        <begin position="214"/>
        <end position="226"/>
    </location>
</feature>
<feature type="disulfide bond" evidence="2">
    <location>
        <begin position="232"/>
        <end position="261"/>
    </location>
</feature>
<feature type="disulfide bond" evidence="2">
    <location>
        <begin position="259"/>
        <end position="271"/>
    </location>
</feature>
<feature type="disulfide bond" evidence="2">
    <location>
        <begin position="309"/>
        <end position="336"/>
    </location>
</feature>
<feature type="disulfide bond" evidence="2">
    <location>
        <begin position="334"/>
        <end position="343"/>
    </location>
</feature>
<feature type="disulfide bond" evidence="2">
    <location>
        <begin position="361"/>
        <end position="387"/>
    </location>
</feature>
<feature type="disulfide bond" evidence="2">
    <location>
        <begin position="375"/>
        <end position="402"/>
    </location>
</feature>
<feature type="disulfide bond" evidence="2">
    <location>
        <begin position="421"/>
        <end position="447"/>
    </location>
</feature>
<feature type="disulfide bond" evidence="2">
    <location>
        <begin position="435"/>
        <end position="462"/>
    </location>
</feature>
<feature type="disulfide bond" evidence="6">
    <location>
        <begin position="471"/>
        <end position="499"/>
    </location>
</feature>
<feature type="disulfide bond" evidence="6">
    <location>
        <begin position="497"/>
        <end position="509"/>
    </location>
</feature>
<feature type="disulfide bond" evidence="6">
    <location>
        <begin position="519"/>
        <end position="546"/>
    </location>
</feature>
<feature type="disulfide bond" evidence="6">
    <location>
        <begin position="544"/>
        <end position="556"/>
    </location>
</feature>
<feature type="disulfide bond" evidence="6">
    <location>
        <begin position="562"/>
        <end position="590"/>
    </location>
</feature>
<feature type="disulfide bond" evidence="6">
    <location>
        <begin position="588"/>
        <end position="600"/>
    </location>
</feature>
<feature type="disulfide bond" evidence="6">
    <location>
        <begin position="2298"/>
        <end position="2327"/>
    </location>
</feature>
<feature type="disulfide bond" evidence="6">
    <location>
        <begin position="2325"/>
        <end position="2337"/>
    </location>
</feature>
<feature type="disulfide bond" evidence="6">
    <location>
        <begin position="2343"/>
        <end position="2370"/>
    </location>
</feature>
<feature type="disulfide bond" evidence="6">
    <location>
        <begin position="2368"/>
        <end position="2380"/>
    </location>
</feature>
<feature type="disulfide bond" evidence="1">
    <location>
        <begin position="2387"/>
        <end position="2413"/>
    </location>
</feature>
<feature type="disulfide bond" evidence="1">
    <location>
        <begin position="2411"/>
        <end position="2422"/>
    </location>
</feature>
<feature type="disulfide bond" description="Interchain (with C-2462)" evidence="6 7">
    <location>
        <position position="2459"/>
    </location>
</feature>
<feature type="disulfide bond" description="Interchain (with C-2458)" evidence="6 7">
    <location>
        <position position="2463"/>
    </location>
</feature>
<feature type="cross-link" description="Isoglutamyl lysine isopeptide (Gln-Lys) (interchain with K-?)" evidence="3">
    <location>
        <position position="35"/>
    </location>
</feature>
<feature type="cross-link" description="Isoglutamyl lysine isopeptide (Gln-Lys) (interchain with K-?)" evidence="3">
    <location>
        <position position="36"/>
    </location>
</feature>
<feature type="cross-link" description="Isoglutamyl lysine isopeptide (Gln-Lys) (interchain with K-?)" evidence="3">
    <location>
        <position position="48"/>
    </location>
</feature>
<reference key="1">
    <citation type="journal article" date="2009" name="Science">
        <title>The genome sequence of taurine cattle: a window to ruminant biology and evolution.</title>
        <authorList>
            <consortium name="The bovine genome sequencing and analysis consortium"/>
        </authorList>
    </citation>
    <scope>NUCLEOTIDE SEQUENCE [LARGE SCALE GENOMIC DNA]</scope>
    <source>
        <strain>Hereford</strain>
    </source>
</reference>
<reference key="2">
    <citation type="journal article" date="1986" name="Eur. J. Biochem.">
        <title>Complete primary structure of bovine plasma fibronectin.</title>
        <authorList>
            <person name="Skorstengaard K."/>
            <person name="Jensen M.S."/>
            <person name="Sahl P."/>
            <person name="Petersen T.E."/>
            <person name="Magnusson S."/>
        </authorList>
    </citation>
    <scope>PROTEIN SEQUENCE OF 33-2478</scope>
</reference>
<reference key="3">
    <citation type="journal article" date="1983" name="Proc. Natl. Acad. Sci. U.S.A.">
        <title>Partial primary structure of bovine plasma fibronectin: three types of internal homology.</title>
        <authorList>
            <person name="Petersen T.E."/>
            <person name="Thorgersen H.C."/>
            <person name="Skorstengaard K."/>
            <person name="Vibe-Pedersen K."/>
            <person name="Sahl P."/>
            <person name="Sottrup-Jensen L."/>
            <person name="Magnusson S."/>
        </authorList>
    </citation>
    <scope>PARTIAL PROTEIN SEQUENCE</scope>
    <scope>PHOSPHORYLATION AT SER-2476</scope>
</reference>
<reference key="4">
    <citation type="journal article" date="1983" name="Proc. Natl. Acad. Sci. U.S.A.">
        <title>Isolation and characterization of cDNA clones for human and bovine fibronectins.</title>
        <authorList>
            <person name="Kornblihtt A.R."/>
            <person name="Vibe-Pedersen K."/>
            <person name="Baralle F.E."/>
        </authorList>
    </citation>
    <scope>NUCLEOTIDE SEQUENCE [MRNA] OF 2383-2478</scope>
</reference>
<reference key="5">
    <citation type="journal article" date="2009" name="Mol. Cell. Proteomics">
        <title>Affinity enrichment and characterization of mucin core-1 type glycopeptides from bovine serum.</title>
        <authorList>
            <person name="Darula Z."/>
            <person name="Medzihradszky K.F."/>
        </authorList>
    </citation>
    <scope>GLYCOSYLATION AT THR-280</scope>
    <scope>IDENTIFICATION BY MASS SPECTROMETRY</scope>
</reference>
<reference key="6">
    <citation type="journal article" date="2014" name="Am. J. Physiol.">
        <title>Role of hypoxia-induced transglutaminase 2 in pulmonary artery smooth muscle cell proliferation.</title>
        <authorList>
            <person name="Penumatsa K.C."/>
            <person name="Toksoz D."/>
            <person name="Warburton R.R."/>
            <person name="Hilmer A.J."/>
            <person name="Liu T."/>
            <person name="Khosla C."/>
            <person name="Comhair S.A."/>
            <person name="Fanburg B.L."/>
        </authorList>
    </citation>
    <scope>SEROTONYLATION</scope>
</reference>
<proteinExistence type="evidence at protein level"/>
<protein>
    <recommendedName>
        <fullName evidence="2">Fibronectin</fullName>
        <shortName>FN</shortName>
    </recommendedName>
    <component>
        <recommendedName>
            <fullName>Anastellin</fullName>
        </recommendedName>
    </component>
</protein>